<comment type="function">
    <text evidence="1">Cleaves peptides in various proteins in a process that requires ATP hydrolysis. Has a chymotrypsin-like activity. Plays a major role in the degradation of misfolded proteins.</text>
</comment>
<comment type="catalytic activity">
    <reaction evidence="1">
        <text>Hydrolysis of proteins to small peptides in the presence of ATP and magnesium. alpha-casein is the usual test substrate. In the absence of ATP, only oligopeptides shorter than five residues are hydrolyzed (such as succinyl-Leu-Tyr-|-NHMec, and Leu-Tyr-Leu-|-Tyr-Trp, in which cleavage of the -Tyr-|-Leu- and -Tyr-|-Trp bonds also occurs).</text>
        <dbReference type="EC" id="3.4.21.92"/>
    </reaction>
</comment>
<comment type="subunit">
    <text evidence="1">Fourteen ClpP subunits assemble into 2 heptameric rings which stack back to back to give a disk-like structure with a central cavity, resembling the structure of eukaryotic proteasomes.</text>
</comment>
<comment type="subcellular location">
    <subcellularLocation>
        <location evidence="1">Cytoplasm</location>
    </subcellularLocation>
</comment>
<comment type="similarity">
    <text evidence="1">Belongs to the peptidase S14 family.</text>
</comment>
<protein>
    <recommendedName>
        <fullName evidence="1">ATP-dependent Clp protease proteolytic subunit</fullName>
        <ecNumber evidence="1">3.4.21.92</ecNumber>
    </recommendedName>
    <alternativeName>
        <fullName evidence="1">Endopeptidase Clp</fullName>
    </alternativeName>
</protein>
<accession>Q12LA1</accession>
<dbReference type="EC" id="3.4.21.92" evidence="1"/>
<dbReference type="EMBL" id="CP000302">
    <property type="protein sequence ID" value="ABE55775.1"/>
    <property type="molecule type" value="Genomic_DNA"/>
</dbReference>
<dbReference type="RefSeq" id="WP_011496926.1">
    <property type="nucleotide sequence ID" value="NC_007954.1"/>
</dbReference>
<dbReference type="SMR" id="Q12LA1"/>
<dbReference type="STRING" id="318161.Sden_2495"/>
<dbReference type="MEROPS" id="S14.001"/>
<dbReference type="KEGG" id="sdn:Sden_2495"/>
<dbReference type="eggNOG" id="COG0740">
    <property type="taxonomic scope" value="Bacteria"/>
</dbReference>
<dbReference type="HOGENOM" id="CLU_058707_3_2_6"/>
<dbReference type="OrthoDB" id="9802800at2"/>
<dbReference type="Proteomes" id="UP000001982">
    <property type="component" value="Chromosome"/>
</dbReference>
<dbReference type="GO" id="GO:0005737">
    <property type="term" value="C:cytoplasm"/>
    <property type="evidence" value="ECO:0007669"/>
    <property type="project" value="UniProtKB-SubCell"/>
</dbReference>
<dbReference type="GO" id="GO:0009368">
    <property type="term" value="C:endopeptidase Clp complex"/>
    <property type="evidence" value="ECO:0007669"/>
    <property type="project" value="TreeGrafter"/>
</dbReference>
<dbReference type="GO" id="GO:0004176">
    <property type="term" value="F:ATP-dependent peptidase activity"/>
    <property type="evidence" value="ECO:0007669"/>
    <property type="project" value="InterPro"/>
</dbReference>
<dbReference type="GO" id="GO:0051117">
    <property type="term" value="F:ATPase binding"/>
    <property type="evidence" value="ECO:0007669"/>
    <property type="project" value="TreeGrafter"/>
</dbReference>
<dbReference type="GO" id="GO:0004252">
    <property type="term" value="F:serine-type endopeptidase activity"/>
    <property type="evidence" value="ECO:0007669"/>
    <property type="project" value="UniProtKB-UniRule"/>
</dbReference>
<dbReference type="GO" id="GO:0006515">
    <property type="term" value="P:protein quality control for misfolded or incompletely synthesized proteins"/>
    <property type="evidence" value="ECO:0007669"/>
    <property type="project" value="TreeGrafter"/>
</dbReference>
<dbReference type="CDD" id="cd07017">
    <property type="entry name" value="S14_ClpP_2"/>
    <property type="match status" value="1"/>
</dbReference>
<dbReference type="FunFam" id="3.90.226.10:FF:000001">
    <property type="entry name" value="ATP-dependent Clp protease proteolytic subunit"/>
    <property type="match status" value="1"/>
</dbReference>
<dbReference type="Gene3D" id="3.90.226.10">
    <property type="entry name" value="2-enoyl-CoA Hydratase, Chain A, domain 1"/>
    <property type="match status" value="1"/>
</dbReference>
<dbReference type="HAMAP" id="MF_00444">
    <property type="entry name" value="ClpP"/>
    <property type="match status" value="1"/>
</dbReference>
<dbReference type="InterPro" id="IPR001907">
    <property type="entry name" value="ClpP"/>
</dbReference>
<dbReference type="InterPro" id="IPR029045">
    <property type="entry name" value="ClpP/crotonase-like_dom_sf"/>
</dbReference>
<dbReference type="InterPro" id="IPR023562">
    <property type="entry name" value="ClpP/TepA"/>
</dbReference>
<dbReference type="InterPro" id="IPR033135">
    <property type="entry name" value="ClpP_His_AS"/>
</dbReference>
<dbReference type="InterPro" id="IPR018215">
    <property type="entry name" value="ClpP_Ser_AS"/>
</dbReference>
<dbReference type="NCBIfam" id="TIGR00493">
    <property type="entry name" value="clpP"/>
    <property type="match status" value="1"/>
</dbReference>
<dbReference type="NCBIfam" id="NF001368">
    <property type="entry name" value="PRK00277.1"/>
    <property type="match status" value="1"/>
</dbReference>
<dbReference type="NCBIfam" id="NF009205">
    <property type="entry name" value="PRK12553.1"/>
    <property type="match status" value="1"/>
</dbReference>
<dbReference type="PANTHER" id="PTHR10381">
    <property type="entry name" value="ATP-DEPENDENT CLP PROTEASE PROTEOLYTIC SUBUNIT"/>
    <property type="match status" value="1"/>
</dbReference>
<dbReference type="PANTHER" id="PTHR10381:SF70">
    <property type="entry name" value="ATP-DEPENDENT CLP PROTEASE PROTEOLYTIC SUBUNIT"/>
    <property type="match status" value="1"/>
</dbReference>
<dbReference type="Pfam" id="PF00574">
    <property type="entry name" value="CLP_protease"/>
    <property type="match status" value="1"/>
</dbReference>
<dbReference type="PRINTS" id="PR00127">
    <property type="entry name" value="CLPPROTEASEP"/>
</dbReference>
<dbReference type="SUPFAM" id="SSF52096">
    <property type="entry name" value="ClpP/crotonase"/>
    <property type="match status" value="1"/>
</dbReference>
<dbReference type="PROSITE" id="PS00382">
    <property type="entry name" value="CLP_PROTEASE_HIS"/>
    <property type="match status" value="1"/>
</dbReference>
<dbReference type="PROSITE" id="PS00381">
    <property type="entry name" value="CLP_PROTEASE_SER"/>
    <property type="match status" value="1"/>
</dbReference>
<feature type="chain" id="PRO_1000072344" description="ATP-dependent Clp protease proteolytic subunit">
    <location>
        <begin position="1"/>
        <end position="203"/>
    </location>
</feature>
<feature type="active site" description="Nucleophile" evidence="1">
    <location>
        <position position="107"/>
    </location>
</feature>
<feature type="active site" evidence="1">
    <location>
        <position position="132"/>
    </location>
</feature>
<proteinExistence type="inferred from homology"/>
<evidence type="ECO:0000255" key="1">
    <source>
        <dbReference type="HAMAP-Rule" id="MF_00444"/>
    </source>
</evidence>
<gene>
    <name evidence="1" type="primary">clpP</name>
    <name type="ordered locus">Sden_2495</name>
</gene>
<reference key="1">
    <citation type="submission" date="2006-03" db="EMBL/GenBank/DDBJ databases">
        <title>Complete sequence of Shewanella denitrificans OS217.</title>
        <authorList>
            <consortium name="US DOE Joint Genome Institute"/>
            <person name="Copeland A."/>
            <person name="Lucas S."/>
            <person name="Lapidus A."/>
            <person name="Barry K."/>
            <person name="Detter J.C."/>
            <person name="Glavina del Rio T."/>
            <person name="Hammon N."/>
            <person name="Israni S."/>
            <person name="Dalin E."/>
            <person name="Tice H."/>
            <person name="Pitluck S."/>
            <person name="Brettin T."/>
            <person name="Bruce D."/>
            <person name="Han C."/>
            <person name="Tapia R."/>
            <person name="Gilna P."/>
            <person name="Kiss H."/>
            <person name="Schmutz J."/>
            <person name="Larimer F."/>
            <person name="Land M."/>
            <person name="Hauser L."/>
            <person name="Kyrpides N."/>
            <person name="Lykidis A."/>
            <person name="Richardson P."/>
        </authorList>
    </citation>
    <scope>NUCLEOTIDE SEQUENCE [LARGE SCALE GENOMIC DNA]</scope>
    <source>
        <strain>OS217 / ATCC BAA-1090 / DSM 15013</strain>
    </source>
</reference>
<organism>
    <name type="scientific">Shewanella denitrificans (strain OS217 / ATCC BAA-1090 / DSM 15013)</name>
    <dbReference type="NCBI Taxonomy" id="318161"/>
    <lineage>
        <taxon>Bacteria</taxon>
        <taxon>Pseudomonadati</taxon>
        <taxon>Pseudomonadota</taxon>
        <taxon>Gammaproteobacteria</taxon>
        <taxon>Alteromonadales</taxon>
        <taxon>Shewanellaceae</taxon>
        <taxon>Shewanella</taxon>
    </lineage>
</organism>
<name>CLPP_SHEDO</name>
<keyword id="KW-0963">Cytoplasm</keyword>
<keyword id="KW-0378">Hydrolase</keyword>
<keyword id="KW-0645">Protease</keyword>
<keyword id="KW-1185">Reference proteome</keyword>
<keyword id="KW-0720">Serine protease</keyword>
<sequence>MHKAPESVLNALVPMVVEQTAKGERSYDIYSRLLKERVIFLVGQVEEHMANLIVAQLLFLESESPDKDIYLYINSPGGSVTAGMAIYDTMQFIKPNVSTVCIGQAASMGAFLLAGGAKGKRHCLPNSRVMIHQPLGGFQGQASDIAIHAQEILGIKNKLNQMLAEHTGQPLEVIERDTDRDNFMSATQAMDYGLVDSLLTSRS</sequence>